<feature type="chain" id="PRO_0000381608" description="Biotin synthase">
    <location>
        <begin position="1"/>
        <end position="346"/>
    </location>
</feature>
<feature type="domain" description="Radical SAM core" evidence="2">
    <location>
        <begin position="38"/>
        <end position="256"/>
    </location>
</feature>
<feature type="binding site" evidence="1">
    <location>
        <position position="53"/>
    </location>
    <ligand>
        <name>[4Fe-4S] cluster</name>
        <dbReference type="ChEBI" id="CHEBI:49883"/>
        <note>4Fe-4S-S-AdoMet</note>
    </ligand>
</feature>
<feature type="binding site" evidence="1">
    <location>
        <position position="57"/>
    </location>
    <ligand>
        <name>[4Fe-4S] cluster</name>
        <dbReference type="ChEBI" id="CHEBI:49883"/>
        <note>4Fe-4S-S-AdoMet</note>
    </ligand>
</feature>
<feature type="binding site" evidence="1">
    <location>
        <position position="60"/>
    </location>
    <ligand>
        <name>[4Fe-4S] cluster</name>
        <dbReference type="ChEBI" id="CHEBI:49883"/>
        <note>4Fe-4S-S-AdoMet</note>
    </ligand>
</feature>
<feature type="binding site" evidence="1">
    <location>
        <position position="97"/>
    </location>
    <ligand>
        <name>[2Fe-2S] cluster</name>
        <dbReference type="ChEBI" id="CHEBI:190135"/>
    </ligand>
</feature>
<feature type="binding site" evidence="1">
    <location>
        <position position="128"/>
    </location>
    <ligand>
        <name>[2Fe-2S] cluster</name>
        <dbReference type="ChEBI" id="CHEBI:190135"/>
    </ligand>
</feature>
<feature type="binding site" evidence="1">
    <location>
        <position position="188"/>
    </location>
    <ligand>
        <name>[2Fe-2S] cluster</name>
        <dbReference type="ChEBI" id="CHEBI:190135"/>
    </ligand>
</feature>
<feature type="binding site" evidence="1">
    <location>
        <position position="260"/>
    </location>
    <ligand>
        <name>[2Fe-2S] cluster</name>
        <dbReference type="ChEBI" id="CHEBI:190135"/>
    </ligand>
</feature>
<name>BIOB_SALSV</name>
<accession>B4TQT9</accession>
<sequence length="346" mass="38776">MARHPRWTLSQVTELFEKPLLELLFEAQQIHRQHFDPQQVQVSTLLSIKTGACPEDCKYCPQSSRYKTGLEAERLMEVEQVLDSARKAKNAGSTRFCMGAAWKNPHERDMPYLEQIVQGVKAMGLETCMTLGMLNESQAQRLANAGLDYYNHNLDTSPEFYGNIITTRTYQERLDTLEKVREAGIKVCSGGIVGLGETVTDRAGLLLQLANLPTPPESVPINMLVKVKGTPLADNDDVDAFDFIRTIAVARIMMPTSYVRLSAGREQMNEQTQAMCFMAGANSIFYGCKLLTTPNPAEDKDLQLFRKLGLNPQQTRVLAGDNEQQQRLEQTLMTPDTDDYYNAAAL</sequence>
<protein>
    <recommendedName>
        <fullName evidence="1">Biotin synthase</fullName>
        <ecNumber evidence="1">2.8.1.6</ecNumber>
    </recommendedName>
</protein>
<keyword id="KW-0001">2Fe-2S</keyword>
<keyword id="KW-0004">4Fe-4S</keyword>
<keyword id="KW-0093">Biotin biosynthesis</keyword>
<keyword id="KW-0408">Iron</keyword>
<keyword id="KW-0411">Iron-sulfur</keyword>
<keyword id="KW-0479">Metal-binding</keyword>
<keyword id="KW-0949">S-adenosyl-L-methionine</keyword>
<keyword id="KW-0808">Transferase</keyword>
<evidence type="ECO:0000255" key="1">
    <source>
        <dbReference type="HAMAP-Rule" id="MF_01694"/>
    </source>
</evidence>
<evidence type="ECO:0000255" key="2">
    <source>
        <dbReference type="PROSITE-ProRule" id="PRU01266"/>
    </source>
</evidence>
<reference key="1">
    <citation type="journal article" date="2011" name="J. Bacteriol.">
        <title>Comparative genomics of 28 Salmonella enterica isolates: evidence for CRISPR-mediated adaptive sublineage evolution.</title>
        <authorList>
            <person name="Fricke W.F."/>
            <person name="Mammel M.K."/>
            <person name="McDermott P.F."/>
            <person name="Tartera C."/>
            <person name="White D.G."/>
            <person name="Leclerc J.E."/>
            <person name="Ravel J."/>
            <person name="Cebula T.A."/>
        </authorList>
    </citation>
    <scope>NUCLEOTIDE SEQUENCE [LARGE SCALE GENOMIC DNA]</scope>
    <source>
        <strain>CVM19633</strain>
    </source>
</reference>
<comment type="function">
    <text evidence="1">Catalyzes the conversion of dethiobiotin (DTB) to biotin by the insertion of a sulfur atom into dethiobiotin via a radical-based mechanism.</text>
</comment>
<comment type="catalytic activity">
    <reaction evidence="1">
        <text>(4R,5S)-dethiobiotin + (sulfur carrier)-SH + 2 reduced [2Fe-2S]-[ferredoxin] + 2 S-adenosyl-L-methionine = (sulfur carrier)-H + biotin + 2 5'-deoxyadenosine + 2 L-methionine + 2 oxidized [2Fe-2S]-[ferredoxin]</text>
        <dbReference type="Rhea" id="RHEA:22060"/>
        <dbReference type="Rhea" id="RHEA-COMP:10000"/>
        <dbReference type="Rhea" id="RHEA-COMP:10001"/>
        <dbReference type="Rhea" id="RHEA-COMP:14737"/>
        <dbReference type="Rhea" id="RHEA-COMP:14739"/>
        <dbReference type="ChEBI" id="CHEBI:17319"/>
        <dbReference type="ChEBI" id="CHEBI:29917"/>
        <dbReference type="ChEBI" id="CHEBI:33737"/>
        <dbReference type="ChEBI" id="CHEBI:33738"/>
        <dbReference type="ChEBI" id="CHEBI:57586"/>
        <dbReference type="ChEBI" id="CHEBI:57844"/>
        <dbReference type="ChEBI" id="CHEBI:59789"/>
        <dbReference type="ChEBI" id="CHEBI:64428"/>
        <dbReference type="ChEBI" id="CHEBI:149473"/>
        <dbReference type="EC" id="2.8.1.6"/>
    </reaction>
</comment>
<comment type="cofactor">
    <cofactor evidence="1">
        <name>[4Fe-4S] cluster</name>
        <dbReference type="ChEBI" id="CHEBI:49883"/>
    </cofactor>
    <text evidence="1">Binds 1 [4Fe-4S] cluster. The cluster is coordinated with 3 cysteines and an exchangeable S-adenosyl-L-methionine.</text>
</comment>
<comment type="cofactor">
    <cofactor evidence="1">
        <name>[2Fe-2S] cluster</name>
        <dbReference type="ChEBI" id="CHEBI:190135"/>
    </cofactor>
    <text evidence="1">Binds 1 [2Fe-2S] cluster. The cluster is coordinated with 3 cysteines and 1 arginine.</text>
</comment>
<comment type="pathway">
    <text evidence="1">Cofactor biosynthesis; biotin biosynthesis; biotin from 7,8-diaminononanoate: step 2/2.</text>
</comment>
<comment type="subunit">
    <text evidence="1">Homodimer.</text>
</comment>
<comment type="similarity">
    <text evidence="1">Belongs to the radical SAM superfamily. Biotin synthase family.</text>
</comment>
<organism>
    <name type="scientific">Salmonella schwarzengrund (strain CVM19633)</name>
    <dbReference type="NCBI Taxonomy" id="439843"/>
    <lineage>
        <taxon>Bacteria</taxon>
        <taxon>Pseudomonadati</taxon>
        <taxon>Pseudomonadota</taxon>
        <taxon>Gammaproteobacteria</taxon>
        <taxon>Enterobacterales</taxon>
        <taxon>Enterobacteriaceae</taxon>
        <taxon>Salmonella</taxon>
    </lineage>
</organism>
<gene>
    <name evidence="1" type="primary">bioB</name>
    <name type="ordered locus">SeSA_A0944</name>
</gene>
<proteinExistence type="inferred from homology"/>
<dbReference type="EC" id="2.8.1.6" evidence="1"/>
<dbReference type="EMBL" id="CP001127">
    <property type="protein sequence ID" value="ACF92388.1"/>
    <property type="molecule type" value="Genomic_DNA"/>
</dbReference>
<dbReference type="RefSeq" id="WP_000090727.1">
    <property type="nucleotide sequence ID" value="NC_011094.1"/>
</dbReference>
<dbReference type="SMR" id="B4TQT9"/>
<dbReference type="KEGG" id="sew:SeSA_A0944"/>
<dbReference type="HOGENOM" id="CLU_033172_1_2_6"/>
<dbReference type="UniPathway" id="UPA00078">
    <property type="reaction ID" value="UER00162"/>
</dbReference>
<dbReference type="Proteomes" id="UP000001865">
    <property type="component" value="Chromosome"/>
</dbReference>
<dbReference type="GO" id="GO:0051537">
    <property type="term" value="F:2 iron, 2 sulfur cluster binding"/>
    <property type="evidence" value="ECO:0007669"/>
    <property type="project" value="UniProtKB-KW"/>
</dbReference>
<dbReference type="GO" id="GO:0051539">
    <property type="term" value="F:4 iron, 4 sulfur cluster binding"/>
    <property type="evidence" value="ECO:0007669"/>
    <property type="project" value="UniProtKB-KW"/>
</dbReference>
<dbReference type="GO" id="GO:0004076">
    <property type="term" value="F:biotin synthase activity"/>
    <property type="evidence" value="ECO:0007669"/>
    <property type="project" value="UniProtKB-UniRule"/>
</dbReference>
<dbReference type="GO" id="GO:0005506">
    <property type="term" value="F:iron ion binding"/>
    <property type="evidence" value="ECO:0007669"/>
    <property type="project" value="UniProtKB-UniRule"/>
</dbReference>
<dbReference type="GO" id="GO:0009102">
    <property type="term" value="P:biotin biosynthetic process"/>
    <property type="evidence" value="ECO:0007669"/>
    <property type="project" value="UniProtKB-UniRule"/>
</dbReference>
<dbReference type="CDD" id="cd01335">
    <property type="entry name" value="Radical_SAM"/>
    <property type="match status" value="1"/>
</dbReference>
<dbReference type="FunFam" id="3.20.20.70:FF:000011">
    <property type="entry name" value="Biotin synthase"/>
    <property type="match status" value="1"/>
</dbReference>
<dbReference type="Gene3D" id="3.20.20.70">
    <property type="entry name" value="Aldolase class I"/>
    <property type="match status" value="1"/>
</dbReference>
<dbReference type="HAMAP" id="MF_01694">
    <property type="entry name" value="BioB"/>
    <property type="match status" value="1"/>
</dbReference>
<dbReference type="InterPro" id="IPR013785">
    <property type="entry name" value="Aldolase_TIM"/>
</dbReference>
<dbReference type="InterPro" id="IPR010722">
    <property type="entry name" value="BATS_dom"/>
</dbReference>
<dbReference type="InterPro" id="IPR002684">
    <property type="entry name" value="Biotin_synth/BioAB"/>
</dbReference>
<dbReference type="InterPro" id="IPR024177">
    <property type="entry name" value="Biotin_synthase"/>
</dbReference>
<dbReference type="InterPro" id="IPR006638">
    <property type="entry name" value="Elp3/MiaA/NifB-like_rSAM"/>
</dbReference>
<dbReference type="InterPro" id="IPR007197">
    <property type="entry name" value="rSAM"/>
</dbReference>
<dbReference type="NCBIfam" id="TIGR00433">
    <property type="entry name" value="bioB"/>
    <property type="match status" value="1"/>
</dbReference>
<dbReference type="PANTHER" id="PTHR22976">
    <property type="entry name" value="BIOTIN SYNTHASE"/>
    <property type="match status" value="1"/>
</dbReference>
<dbReference type="PANTHER" id="PTHR22976:SF2">
    <property type="entry name" value="BIOTIN SYNTHASE, MITOCHONDRIAL"/>
    <property type="match status" value="1"/>
</dbReference>
<dbReference type="Pfam" id="PF06968">
    <property type="entry name" value="BATS"/>
    <property type="match status" value="1"/>
</dbReference>
<dbReference type="Pfam" id="PF04055">
    <property type="entry name" value="Radical_SAM"/>
    <property type="match status" value="1"/>
</dbReference>
<dbReference type="PIRSF" id="PIRSF001619">
    <property type="entry name" value="Biotin_synth"/>
    <property type="match status" value="1"/>
</dbReference>
<dbReference type="SFLD" id="SFLDF00272">
    <property type="entry name" value="biotin_synthase"/>
    <property type="match status" value="1"/>
</dbReference>
<dbReference type="SFLD" id="SFLDS00029">
    <property type="entry name" value="Radical_SAM"/>
    <property type="match status" value="1"/>
</dbReference>
<dbReference type="SMART" id="SM00876">
    <property type="entry name" value="BATS"/>
    <property type="match status" value="1"/>
</dbReference>
<dbReference type="SMART" id="SM00729">
    <property type="entry name" value="Elp3"/>
    <property type="match status" value="1"/>
</dbReference>
<dbReference type="SUPFAM" id="SSF102114">
    <property type="entry name" value="Radical SAM enzymes"/>
    <property type="match status" value="1"/>
</dbReference>
<dbReference type="PROSITE" id="PS51918">
    <property type="entry name" value="RADICAL_SAM"/>
    <property type="match status" value="1"/>
</dbReference>